<accession>B8HWU5</accession>
<sequence>MESIAYVLIFACLIGLFFFAIFFREPPRITKK</sequence>
<feature type="chain" id="PRO_1000148579" description="Photosystem II reaction center protein T">
    <location>
        <begin position="1"/>
        <end position="32"/>
    </location>
</feature>
<feature type="transmembrane region" description="Helical" evidence="1">
    <location>
        <begin position="3"/>
        <end position="23"/>
    </location>
</feature>
<evidence type="ECO:0000255" key="1">
    <source>
        <dbReference type="HAMAP-Rule" id="MF_00808"/>
    </source>
</evidence>
<organism>
    <name type="scientific">Cyanothece sp. (strain PCC 7425 / ATCC 29141)</name>
    <dbReference type="NCBI Taxonomy" id="395961"/>
    <lineage>
        <taxon>Bacteria</taxon>
        <taxon>Bacillati</taxon>
        <taxon>Cyanobacteriota</taxon>
        <taxon>Cyanophyceae</taxon>
        <taxon>Gomontiellales</taxon>
        <taxon>Cyanothecaceae</taxon>
        <taxon>Cyanothece</taxon>
    </lineage>
</organism>
<proteinExistence type="inferred from homology"/>
<comment type="function">
    <text evidence="1">Found at the monomer-monomer interface of the photosystem II (PS II) dimer, plays a role in assembly and dimerization of PSII. PSII is a light-driven water plastoquinone oxidoreductase, using light energy to abstract electrons from H(2)O, generating a proton gradient subsequently used for ATP formation.</text>
</comment>
<comment type="subunit">
    <text evidence="1">PSII is composed of 1 copy each of membrane proteins PsbA, PsbB, PsbC, PsbD, PsbE, PsbF, PsbH, PsbI, PsbJ, PsbK, PsbL, PsbM, PsbT, PsbX, PsbY, PsbZ, Psb30/Ycf12, peripheral proteins PsbO, CyanoQ (PsbQ), PsbU, PsbV and a large number of cofactors. It forms dimeric complexes.</text>
</comment>
<comment type="subcellular location">
    <subcellularLocation>
        <location evidence="1">Cellular thylakoid membrane</location>
        <topology evidence="1">Single-pass membrane protein</topology>
    </subcellularLocation>
</comment>
<comment type="similarity">
    <text evidence="1">Belongs to the PsbT family.</text>
</comment>
<gene>
    <name evidence="1" type="primary">psbT</name>
    <name type="ordered locus">Cyan7425_0862</name>
</gene>
<keyword id="KW-0472">Membrane</keyword>
<keyword id="KW-0602">Photosynthesis</keyword>
<keyword id="KW-0604">Photosystem II</keyword>
<keyword id="KW-0793">Thylakoid</keyword>
<keyword id="KW-0812">Transmembrane</keyword>
<keyword id="KW-1133">Transmembrane helix</keyword>
<dbReference type="EMBL" id="CP001344">
    <property type="protein sequence ID" value="ACL43248.1"/>
    <property type="molecule type" value="Genomic_DNA"/>
</dbReference>
<dbReference type="SMR" id="B8HWU5"/>
<dbReference type="STRING" id="395961.Cyan7425_0862"/>
<dbReference type="KEGG" id="cyn:Cyan7425_0862"/>
<dbReference type="HOGENOM" id="CLU_217078_1_0_3"/>
<dbReference type="OrthoDB" id="427659at2"/>
<dbReference type="GO" id="GO:0009539">
    <property type="term" value="C:photosystem II reaction center"/>
    <property type="evidence" value="ECO:0007669"/>
    <property type="project" value="InterPro"/>
</dbReference>
<dbReference type="GO" id="GO:0031676">
    <property type="term" value="C:plasma membrane-derived thylakoid membrane"/>
    <property type="evidence" value="ECO:0007669"/>
    <property type="project" value="UniProtKB-SubCell"/>
</dbReference>
<dbReference type="GO" id="GO:0015979">
    <property type="term" value="P:photosynthesis"/>
    <property type="evidence" value="ECO:0007669"/>
    <property type="project" value="UniProtKB-UniRule"/>
</dbReference>
<dbReference type="HAMAP" id="MF_00808">
    <property type="entry name" value="PSII_PsbT"/>
    <property type="match status" value="1"/>
</dbReference>
<dbReference type="InterPro" id="IPR001743">
    <property type="entry name" value="PSII_PsbT"/>
</dbReference>
<dbReference type="InterPro" id="IPR037268">
    <property type="entry name" value="PSII_PsbT_sf"/>
</dbReference>
<dbReference type="Pfam" id="PF01405">
    <property type="entry name" value="PsbT"/>
    <property type="match status" value="1"/>
</dbReference>
<dbReference type="SUPFAM" id="SSF161029">
    <property type="entry name" value="Photosystem II reaction center protein T, PsbT"/>
    <property type="match status" value="1"/>
</dbReference>
<reference key="1">
    <citation type="journal article" date="2011" name="MBio">
        <title>Novel metabolic attributes of the genus Cyanothece, comprising a group of unicellular nitrogen-fixing Cyanobacteria.</title>
        <authorList>
            <person name="Bandyopadhyay A."/>
            <person name="Elvitigala T."/>
            <person name="Welsh E."/>
            <person name="Stockel J."/>
            <person name="Liberton M."/>
            <person name="Min H."/>
            <person name="Sherman L.A."/>
            <person name="Pakrasi H.B."/>
        </authorList>
    </citation>
    <scope>NUCLEOTIDE SEQUENCE [LARGE SCALE GENOMIC DNA]</scope>
    <source>
        <strain>PCC 7425 / ATCC 29141</strain>
    </source>
</reference>
<protein>
    <recommendedName>
        <fullName evidence="1">Photosystem II reaction center protein T</fullName>
        <shortName evidence="1">PSII-T</shortName>
    </recommendedName>
</protein>
<name>PSBT_CYAP4</name>